<gene>
    <name evidence="1" type="primary">htpX</name>
    <name type="ordered locus">BSUIS_B1291</name>
</gene>
<evidence type="ECO:0000255" key="1">
    <source>
        <dbReference type="HAMAP-Rule" id="MF_00188"/>
    </source>
</evidence>
<evidence type="ECO:0000256" key="2">
    <source>
        <dbReference type="SAM" id="MobiDB-lite"/>
    </source>
</evidence>
<accession>A9WWT8</accession>
<comment type="cofactor">
    <cofactor evidence="1">
        <name>Zn(2+)</name>
        <dbReference type="ChEBI" id="CHEBI:29105"/>
    </cofactor>
    <text evidence="1">Binds 1 zinc ion per subunit.</text>
</comment>
<comment type="subcellular location">
    <subcellularLocation>
        <location evidence="1">Cell inner membrane</location>
        <topology evidence="1">Multi-pass membrane protein</topology>
    </subcellularLocation>
</comment>
<comment type="similarity">
    <text evidence="1">Belongs to the peptidase M48B family.</text>
</comment>
<keyword id="KW-0997">Cell inner membrane</keyword>
<keyword id="KW-1003">Cell membrane</keyword>
<keyword id="KW-0378">Hydrolase</keyword>
<keyword id="KW-0472">Membrane</keyword>
<keyword id="KW-0479">Metal-binding</keyword>
<keyword id="KW-0482">Metalloprotease</keyword>
<keyword id="KW-0645">Protease</keyword>
<keyword id="KW-0812">Transmembrane</keyword>
<keyword id="KW-1133">Transmembrane helix</keyword>
<keyword id="KW-0862">Zinc</keyword>
<reference key="1">
    <citation type="submission" date="2007-12" db="EMBL/GenBank/DDBJ databases">
        <title>Brucella suis ATCC 23445 whole genome shotgun sequencing project.</title>
        <authorList>
            <person name="Setubal J.C."/>
            <person name="Bowns C."/>
            <person name="Boyle S."/>
            <person name="Crasta O.R."/>
            <person name="Czar M.J."/>
            <person name="Dharmanolla C."/>
            <person name="Gillespie J.J."/>
            <person name="Kenyon R.W."/>
            <person name="Lu J."/>
            <person name="Mane S."/>
            <person name="Mohapatra S."/>
            <person name="Nagrani S."/>
            <person name="Purkayastha A."/>
            <person name="Rajasimha H.K."/>
            <person name="Shallom J.M."/>
            <person name="Shallom S."/>
            <person name="Shukla M."/>
            <person name="Snyder E.E."/>
            <person name="Sobral B.W."/>
            <person name="Wattam A.R."/>
            <person name="Will R."/>
            <person name="Williams K."/>
            <person name="Yoo H."/>
            <person name="Bruce D."/>
            <person name="Detter C."/>
            <person name="Munk C."/>
            <person name="Brettin T.S."/>
        </authorList>
    </citation>
    <scope>NUCLEOTIDE SEQUENCE [LARGE SCALE GENOMIC DNA]</scope>
    <source>
        <strain>ATCC 23445 / NCTC 10510</strain>
    </source>
</reference>
<sequence length="325" mass="34486">MNMTKTAMLIALMTVMFMSIGYLLGGGGGMMIALVIAVAMNLFGYWNSDKMVLRMYNAQEVDERSAPEYYRMVSGLAANAGLPMPKVYIIHEDQPNAFATGRNPENAAVAATTGLLNRLSPEEVAGVMAHELAHVQNRDTLTMTIVATLAGAISMLGNFAFFLGGNRENGNGVMGVVGTLLAMIVAPFAAMIVQMAVSRTREYAADKRGAEICGNPLWLSSALGKIARGAKVIPNEEAEHNPATAHMFIINPLSGRGADNLFSTHPDTDNRIAALEQMAAEMGIRSAAMTARAAAPSQNSGPWGQRSDNAGGNSNGGSRYRGPWS</sequence>
<feature type="chain" id="PRO_1000077447" description="Protease HtpX homolog">
    <location>
        <begin position="1"/>
        <end position="325"/>
    </location>
</feature>
<feature type="transmembrane region" description="Helical" evidence="1">
    <location>
        <begin position="20"/>
        <end position="40"/>
    </location>
</feature>
<feature type="transmembrane region" description="Helical" evidence="1">
    <location>
        <begin position="145"/>
        <end position="165"/>
    </location>
</feature>
<feature type="transmembrane region" description="Helical" evidence="1">
    <location>
        <begin position="173"/>
        <end position="193"/>
    </location>
</feature>
<feature type="region of interest" description="Disordered" evidence="2">
    <location>
        <begin position="288"/>
        <end position="325"/>
    </location>
</feature>
<feature type="compositionally biased region" description="Low complexity" evidence="2">
    <location>
        <begin position="306"/>
        <end position="325"/>
    </location>
</feature>
<feature type="active site" evidence="1">
    <location>
        <position position="131"/>
    </location>
</feature>
<feature type="binding site" evidence="1">
    <location>
        <position position="130"/>
    </location>
    <ligand>
        <name>Zn(2+)</name>
        <dbReference type="ChEBI" id="CHEBI:29105"/>
        <note>catalytic</note>
    </ligand>
</feature>
<feature type="binding site" evidence="1">
    <location>
        <position position="134"/>
    </location>
    <ligand>
        <name>Zn(2+)</name>
        <dbReference type="ChEBI" id="CHEBI:29105"/>
        <note>catalytic</note>
    </ligand>
</feature>
<feature type="binding site" evidence="1">
    <location>
        <position position="202"/>
    </location>
    <ligand>
        <name>Zn(2+)</name>
        <dbReference type="ChEBI" id="CHEBI:29105"/>
        <note>catalytic</note>
    </ligand>
</feature>
<name>HTPX_BRUSI</name>
<dbReference type="EC" id="3.4.24.-" evidence="1"/>
<dbReference type="EMBL" id="CP000912">
    <property type="protein sequence ID" value="ABY40224.1"/>
    <property type="molecule type" value="Genomic_DNA"/>
</dbReference>
<dbReference type="RefSeq" id="WP_004688727.1">
    <property type="nucleotide sequence ID" value="NC_010167.1"/>
</dbReference>
<dbReference type="GeneID" id="97533062"/>
<dbReference type="KEGG" id="bmt:BSUIS_B1291"/>
<dbReference type="HOGENOM" id="CLU_042266_3_0_5"/>
<dbReference type="Proteomes" id="UP000008545">
    <property type="component" value="Chromosome II"/>
</dbReference>
<dbReference type="GO" id="GO:0005886">
    <property type="term" value="C:plasma membrane"/>
    <property type="evidence" value="ECO:0007669"/>
    <property type="project" value="UniProtKB-SubCell"/>
</dbReference>
<dbReference type="GO" id="GO:0004222">
    <property type="term" value="F:metalloendopeptidase activity"/>
    <property type="evidence" value="ECO:0007669"/>
    <property type="project" value="UniProtKB-UniRule"/>
</dbReference>
<dbReference type="GO" id="GO:0008270">
    <property type="term" value="F:zinc ion binding"/>
    <property type="evidence" value="ECO:0007669"/>
    <property type="project" value="UniProtKB-UniRule"/>
</dbReference>
<dbReference type="GO" id="GO:0006508">
    <property type="term" value="P:proteolysis"/>
    <property type="evidence" value="ECO:0007669"/>
    <property type="project" value="UniProtKB-KW"/>
</dbReference>
<dbReference type="CDD" id="cd07336">
    <property type="entry name" value="M48B_HtpX_like"/>
    <property type="match status" value="1"/>
</dbReference>
<dbReference type="Gene3D" id="3.30.2010.10">
    <property type="entry name" value="Metalloproteases ('zincins'), catalytic domain"/>
    <property type="match status" value="1"/>
</dbReference>
<dbReference type="HAMAP" id="MF_00188">
    <property type="entry name" value="Pept_M48_protease_HtpX"/>
    <property type="match status" value="1"/>
</dbReference>
<dbReference type="InterPro" id="IPR050083">
    <property type="entry name" value="HtpX_protease"/>
</dbReference>
<dbReference type="InterPro" id="IPR022919">
    <property type="entry name" value="Pept_M48_protease_HtpX"/>
</dbReference>
<dbReference type="InterPro" id="IPR001915">
    <property type="entry name" value="Peptidase_M48"/>
</dbReference>
<dbReference type="NCBIfam" id="NF002363">
    <property type="entry name" value="PRK01345.1"/>
    <property type="match status" value="1"/>
</dbReference>
<dbReference type="NCBIfam" id="NF002826">
    <property type="entry name" value="PRK03001.1"/>
    <property type="match status" value="1"/>
</dbReference>
<dbReference type="PANTHER" id="PTHR43221">
    <property type="entry name" value="PROTEASE HTPX"/>
    <property type="match status" value="1"/>
</dbReference>
<dbReference type="PANTHER" id="PTHR43221:SF1">
    <property type="entry name" value="PROTEASE HTPX"/>
    <property type="match status" value="1"/>
</dbReference>
<dbReference type="Pfam" id="PF01435">
    <property type="entry name" value="Peptidase_M48"/>
    <property type="match status" value="1"/>
</dbReference>
<dbReference type="PROSITE" id="PS00142">
    <property type="entry name" value="ZINC_PROTEASE"/>
    <property type="match status" value="1"/>
</dbReference>
<proteinExistence type="inferred from homology"/>
<organism>
    <name type="scientific">Brucella suis (strain ATCC 23445 / NCTC 10510)</name>
    <dbReference type="NCBI Taxonomy" id="470137"/>
    <lineage>
        <taxon>Bacteria</taxon>
        <taxon>Pseudomonadati</taxon>
        <taxon>Pseudomonadota</taxon>
        <taxon>Alphaproteobacteria</taxon>
        <taxon>Hyphomicrobiales</taxon>
        <taxon>Brucellaceae</taxon>
        <taxon>Brucella/Ochrobactrum group</taxon>
        <taxon>Brucella</taxon>
    </lineage>
</organism>
<protein>
    <recommendedName>
        <fullName evidence="1">Protease HtpX homolog</fullName>
        <ecNumber evidence="1">3.4.24.-</ecNumber>
    </recommendedName>
</protein>